<feature type="chain" id="PRO_0000235417" description="Holliday junction branch migration complex subunit RuvB">
    <location>
        <begin position="1"/>
        <end position="347"/>
    </location>
</feature>
<feature type="region of interest" description="Disordered" evidence="2">
    <location>
        <begin position="1"/>
        <end position="29"/>
    </location>
</feature>
<feature type="region of interest" description="Large ATPase domain (RuvB-L)" evidence="1">
    <location>
        <begin position="13"/>
        <end position="198"/>
    </location>
</feature>
<feature type="region of interest" description="Small ATPAse domain (RuvB-S)" evidence="1">
    <location>
        <begin position="199"/>
        <end position="270"/>
    </location>
</feature>
<feature type="region of interest" description="Head domain (RuvB-H)" evidence="1">
    <location>
        <begin position="273"/>
        <end position="347"/>
    </location>
</feature>
<feature type="compositionally biased region" description="Polar residues" evidence="2">
    <location>
        <begin position="1"/>
        <end position="10"/>
    </location>
</feature>
<feature type="binding site" evidence="1">
    <location>
        <position position="37"/>
    </location>
    <ligand>
        <name>ATP</name>
        <dbReference type="ChEBI" id="CHEBI:30616"/>
    </ligand>
</feature>
<feature type="binding site" evidence="1">
    <location>
        <position position="38"/>
    </location>
    <ligand>
        <name>ATP</name>
        <dbReference type="ChEBI" id="CHEBI:30616"/>
    </ligand>
</feature>
<feature type="binding site" evidence="1">
    <location>
        <position position="79"/>
    </location>
    <ligand>
        <name>ATP</name>
        <dbReference type="ChEBI" id="CHEBI:30616"/>
    </ligand>
</feature>
<feature type="binding site" evidence="1">
    <location>
        <position position="82"/>
    </location>
    <ligand>
        <name>ATP</name>
        <dbReference type="ChEBI" id="CHEBI:30616"/>
    </ligand>
</feature>
<feature type="binding site" evidence="1">
    <location>
        <position position="83"/>
    </location>
    <ligand>
        <name>ATP</name>
        <dbReference type="ChEBI" id="CHEBI:30616"/>
    </ligand>
</feature>
<feature type="binding site" evidence="1">
    <location>
        <position position="83"/>
    </location>
    <ligand>
        <name>Mg(2+)</name>
        <dbReference type="ChEBI" id="CHEBI:18420"/>
    </ligand>
</feature>
<feature type="binding site" evidence="1">
    <location>
        <position position="84"/>
    </location>
    <ligand>
        <name>ATP</name>
        <dbReference type="ChEBI" id="CHEBI:30616"/>
    </ligand>
</feature>
<feature type="binding site" evidence="1">
    <location>
        <position position="188"/>
    </location>
    <ligand>
        <name>ATP</name>
        <dbReference type="ChEBI" id="CHEBI:30616"/>
    </ligand>
</feature>
<feature type="binding site" evidence="1">
    <location>
        <position position="198"/>
    </location>
    <ligand>
        <name>ATP</name>
        <dbReference type="ChEBI" id="CHEBI:30616"/>
    </ligand>
</feature>
<feature type="binding site" evidence="1">
    <location>
        <position position="235"/>
    </location>
    <ligand>
        <name>ATP</name>
        <dbReference type="ChEBI" id="CHEBI:30616"/>
    </ligand>
</feature>
<feature type="binding site" evidence="1">
    <location>
        <position position="328"/>
    </location>
    <ligand>
        <name>DNA</name>
        <dbReference type="ChEBI" id="CHEBI:16991"/>
    </ligand>
</feature>
<feature type="binding site" evidence="1">
    <location>
        <position position="333"/>
    </location>
    <ligand>
        <name>DNA</name>
        <dbReference type="ChEBI" id="CHEBI:16991"/>
    </ligand>
</feature>
<dbReference type="EC" id="3.6.4.-" evidence="1"/>
<dbReference type="EMBL" id="CP000097">
    <property type="protein sequence ID" value="ABB25137.1"/>
    <property type="molecule type" value="Genomic_DNA"/>
</dbReference>
<dbReference type="RefSeq" id="WP_011359001.1">
    <property type="nucleotide sequence ID" value="NC_007513.1"/>
</dbReference>
<dbReference type="SMR" id="Q3B0J1"/>
<dbReference type="STRING" id="316279.Syncc9902_0162"/>
<dbReference type="KEGG" id="sye:Syncc9902_0162"/>
<dbReference type="eggNOG" id="COG2255">
    <property type="taxonomic scope" value="Bacteria"/>
</dbReference>
<dbReference type="HOGENOM" id="CLU_055599_1_0_3"/>
<dbReference type="OrthoDB" id="9804478at2"/>
<dbReference type="Proteomes" id="UP000002712">
    <property type="component" value="Chromosome"/>
</dbReference>
<dbReference type="GO" id="GO:0005737">
    <property type="term" value="C:cytoplasm"/>
    <property type="evidence" value="ECO:0007669"/>
    <property type="project" value="UniProtKB-SubCell"/>
</dbReference>
<dbReference type="GO" id="GO:0048476">
    <property type="term" value="C:Holliday junction resolvase complex"/>
    <property type="evidence" value="ECO:0007669"/>
    <property type="project" value="UniProtKB-UniRule"/>
</dbReference>
<dbReference type="GO" id="GO:0005524">
    <property type="term" value="F:ATP binding"/>
    <property type="evidence" value="ECO:0007669"/>
    <property type="project" value="UniProtKB-UniRule"/>
</dbReference>
<dbReference type="GO" id="GO:0016887">
    <property type="term" value="F:ATP hydrolysis activity"/>
    <property type="evidence" value="ECO:0007669"/>
    <property type="project" value="InterPro"/>
</dbReference>
<dbReference type="GO" id="GO:0000400">
    <property type="term" value="F:four-way junction DNA binding"/>
    <property type="evidence" value="ECO:0007669"/>
    <property type="project" value="UniProtKB-UniRule"/>
</dbReference>
<dbReference type="GO" id="GO:0009378">
    <property type="term" value="F:four-way junction helicase activity"/>
    <property type="evidence" value="ECO:0007669"/>
    <property type="project" value="InterPro"/>
</dbReference>
<dbReference type="GO" id="GO:0006310">
    <property type="term" value="P:DNA recombination"/>
    <property type="evidence" value="ECO:0007669"/>
    <property type="project" value="UniProtKB-UniRule"/>
</dbReference>
<dbReference type="GO" id="GO:0006281">
    <property type="term" value="P:DNA repair"/>
    <property type="evidence" value="ECO:0007669"/>
    <property type="project" value="UniProtKB-UniRule"/>
</dbReference>
<dbReference type="CDD" id="cd00009">
    <property type="entry name" value="AAA"/>
    <property type="match status" value="1"/>
</dbReference>
<dbReference type="Gene3D" id="1.10.8.60">
    <property type="match status" value="1"/>
</dbReference>
<dbReference type="Gene3D" id="3.40.50.300">
    <property type="entry name" value="P-loop containing nucleotide triphosphate hydrolases"/>
    <property type="match status" value="1"/>
</dbReference>
<dbReference type="Gene3D" id="1.10.10.10">
    <property type="entry name" value="Winged helix-like DNA-binding domain superfamily/Winged helix DNA-binding domain"/>
    <property type="match status" value="1"/>
</dbReference>
<dbReference type="HAMAP" id="MF_00016">
    <property type="entry name" value="DNA_HJ_migration_RuvB"/>
    <property type="match status" value="1"/>
</dbReference>
<dbReference type="InterPro" id="IPR003593">
    <property type="entry name" value="AAA+_ATPase"/>
</dbReference>
<dbReference type="InterPro" id="IPR041445">
    <property type="entry name" value="AAA_lid_4"/>
</dbReference>
<dbReference type="InterPro" id="IPR004605">
    <property type="entry name" value="DNA_helicase_Holl-junc_RuvB"/>
</dbReference>
<dbReference type="InterPro" id="IPR027417">
    <property type="entry name" value="P-loop_NTPase"/>
</dbReference>
<dbReference type="InterPro" id="IPR008824">
    <property type="entry name" value="RuvB-like_N"/>
</dbReference>
<dbReference type="InterPro" id="IPR008823">
    <property type="entry name" value="RuvB_C"/>
</dbReference>
<dbReference type="InterPro" id="IPR036388">
    <property type="entry name" value="WH-like_DNA-bd_sf"/>
</dbReference>
<dbReference type="InterPro" id="IPR036390">
    <property type="entry name" value="WH_DNA-bd_sf"/>
</dbReference>
<dbReference type="NCBIfam" id="NF000868">
    <property type="entry name" value="PRK00080.1"/>
    <property type="match status" value="1"/>
</dbReference>
<dbReference type="NCBIfam" id="TIGR00635">
    <property type="entry name" value="ruvB"/>
    <property type="match status" value="1"/>
</dbReference>
<dbReference type="PANTHER" id="PTHR42848">
    <property type="match status" value="1"/>
</dbReference>
<dbReference type="PANTHER" id="PTHR42848:SF1">
    <property type="entry name" value="HOLLIDAY JUNCTION BRANCH MIGRATION COMPLEX SUBUNIT RUVB"/>
    <property type="match status" value="1"/>
</dbReference>
<dbReference type="Pfam" id="PF17864">
    <property type="entry name" value="AAA_lid_4"/>
    <property type="match status" value="1"/>
</dbReference>
<dbReference type="Pfam" id="PF05491">
    <property type="entry name" value="RuvB_C"/>
    <property type="match status" value="1"/>
</dbReference>
<dbReference type="Pfam" id="PF05496">
    <property type="entry name" value="RuvB_N"/>
    <property type="match status" value="1"/>
</dbReference>
<dbReference type="SMART" id="SM00382">
    <property type="entry name" value="AAA"/>
    <property type="match status" value="1"/>
</dbReference>
<dbReference type="SUPFAM" id="SSF52540">
    <property type="entry name" value="P-loop containing nucleoside triphosphate hydrolases"/>
    <property type="match status" value="1"/>
</dbReference>
<dbReference type="SUPFAM" id="SSF46785">
    <property type="entry name" value="Winged helix' DNA-binding domain"/>
    <property type="match status" value="1"/>
</dbReference>
<protein>
    <recommendedName>
        <fullName evidence="1">Holliday junction branch migration complex subunit RuvB</fullName>
        <ecNumber evidence="1">3.6.4.-</ecNumber>
    </recommendedName>
</protein>
<keyword id="KW-0067">ATP-binding</keyword>
<keyword id="KW-0963">Cytoplasm</keyword>
<keyword id="KW-0227">DNA damage</keyword>
<keyword id="KW-0233">DNA recombination</keyword>
<keyword id="KW-0234">DNA repair</keyword>
<keyword id="KW-0238">DNA-binding</keyword>
<keyword id="KW-0378">Hydrolase</keyword>
<keyword id="KW-0547">Nucleotide-binding</keyword>
<keyword id="KW-1185">Reference proteome</keyword>
<comment type="function">
    <text evidence="1">The RuvA-RuvB-RuvC complex processes Holliday junction (HJ) DNA during genetic recombination and DNA repair, while the RuvA-RuvB complex plays an important role in the rescue of blocked DNA replication forks via replication fork reversal (RFR). RuvA specifically binds to HJ cruciform DNA, conferring on it an open structure. The RuvB hexamer acts as an ATP-dependent pump, pulling dsDNA into and through the RuvAB complex. RuvB forms 2 homohexamers on either side of HJ DNA bound by 1 or 2 RuvA tetramers; 4 subunits per hexamer contact DNA at a time. Coordinated motions by a converter formed by DNA-disengaged RuvB subunits stimulates ATP hydrolysis and nucleotide exchange. Immobilization of the converter enables RuvB to convert the ATP-contained energy into a lever motion, pulling 2 nucleotides of DNA out of the RuvA tetramer per ATP hydrolyzed, thus driving DNA branch migration. The RuvB motors rotate together with the DNA substrate, which together with the progressing nucleotide cycle form the mechanistic basis for DNA recombination by continuous HJ branch migration. Branch migration allows RuvC to scan DNA until it finds its consensus sequence, where it cleaves and resolves cruciform DNA.</text>
</comment>
<comment type="catalytic activity">
    <reaction evidence="1">
        <text>ATP + H2O = ADP + phosphate + H(+)</text>
        <dbReference type="Rhea" id="RHEA:13065"/>
        <dbReference type="ChEBI" id="CHEBI:15377"/>
        <dbReference type="ChEBI" id="CHEBI:15378"/>
        <dbReference type="ChEBI" id="CHEBI:30616"/>
        <dbReference type="ChEBI" id="CHEBI:43474"/>
        <dbReference type="ChEBI" id="CHEBI:456216"/>
    </reaction>
</comment>
<comment type="subunit">
    <text evidence="1">Homohexamer. Forms an RuvA(8)-RuvB(12)-Holliday junction (HJ) complex. HJ DNA is sandwiched between 2 RuvA tetramers; dsDNA enters through RuvA and exits via RuvB. An RuvB hexamer assembles on each DNA strand where it exits the tetramer. Each RuvB hexamer is contacted by two RuvA subunits (via domain III) on 2 adjacent RuvB subunits; this complex drives branch migration. In the full resolvosome a probable DNA-RuvA(4)-RuvB(12)-RuvC(2) complex forms which resolves the HJ.</text>
</comment>
<comment type="subcellular location">
    <subcellularLocation>
        <location evidence="1">Cytoplasm</location>
    </subcellularLocation>
</comment>
<comment type="domain">
    <text evidence="1">Has 3 domains, the large (RuvB-L) and small ATPase (RuvB-S) domains and the C-terminal head (RuvB-H) domain. The head domain binds DNA, while the ATPase domains jointly bind ATP, ADP or are empty depending on the state of the subunit in the translocation cycle. During a single DNA translocation step the structure of each domain remains the same, but their relative positions change.</text>
</comment>
<comment type="similarity">
    <text evidence="1">Belongs to the RuvB family.</text>
</comment>
<evidence type="ECO:0000255" key="1">
    <source>
        <dbReference type="HAMAP-Rule" id="MF_00016"/>
    </source>
</evidence>
<evidence type="ECO:0000256" key="2">
    <source>
        <dbReference type="SAM" id="MobiDB-lite"/>
    </source>
</evidence>
<sequence>MAIVSSSSGRKSPCRETALVDPQPAPEEQVIRPEDSLRPKRLSEYIGQSELKQVLGIAVEAALGRGEALDHVLLYGPPGLGKTTMALVLAEELGVNCRITSAPALERPRDIVGLLVNLQPRDLLFIDEIHRLSRVAEELLYPAMEDRRLDLTVGKGSTARTRTLDLPPFTLVGATTRAGSLSSPLRDRFGLIQRLEFYGQTDLEAIVARTAELVSVDLTFDACARIAASCRGTPRIANRLLRRVRDVASVRQGKGTIDDAMVAEALSLHRVDHRGLDASDRRLLAMLMDQHGGGPVGLETLAAALGEDPVTLETVVEPFLLQQGLLVRTPRGRMVTDAARSHIAEAA</sequence>
<proteinExistence type="inferred from homology"/>
<name>RUVB_SYNS9</name>
<reference key="1">
    <citation type="submission" date="2005-08" db="EMBL/GenBank/DDBJ databases">
        <title>Complete sequence of Synechococcus sp. CC9902.</title>
        <authorList>
            <person name="Copeland A."/>
            <person name="Lucas S."/>
            <person name="Lapidus A."/>
            <person name="Barry K."/>
            <person name="Detter J.C."/>
            <person name="Glavina T."/>
            <person name="Hammon N."/>
            <person name="Israni S."/>
            <person name="Pitluck S."/>
            <person name="Martinez M."/>
            <person name="Schmutz J."/>
            <person name="Larimer F."/>
            <person name="Land M."/>
            <person name="Kyrpides N."/>
            <person name="Ivanova N."/>
            <person name="Richardson P."/>
        </authorList>
    </citation>
    <scope>NUCLEOTIDE SEQUENCE [LARGE SCALE GENOMIC DNA]</scope>
    <source>
        <strain>CC9902</strain>
    </source>
</reference>
<organism>
    <name type="scientific">Synechococcus sp. (strain CC9902)</name>
    <dbReference type="NCBI Taxonomy" id="316279"/>
    <lineage>
        <taxon>Bacteria</taxon>
        <taxon>Bacillati</taxon>
        <taxon>Cyanobacteriota</taxon>
        <taxon>Cyanophyceae</taxon>
        <taxon>Synechococcales</taxon>
        <taxon>Synechococcaceae</taxon>
        <taxon>Synechococcus</taxon>
    </lineage>
</organism>
<gene>
    <name evidence="1" type="primary">ruvB</name>
    <name type="ordered locus">Syncc9902_0162</name>
</gene>
<accession>Q3B0J1</accession>